<dbReference type="EC" id="6.1.1.5" evidence="1"/>
<dbReference type="EMBL" id="AM933173">
    <property type="protein sequence ID" value="CAR35957.1"/>
    <property type="molecule type" value="Genomic_DNA"/>
</dbReference>
<dbReference type="RefSeq" id="WP_001674865.1">
    <property type="nucleotide sequence ID" value="NC_011274.1"/>
</dbReference>
<dbReference type="SMR" id="B5RF43"/>
<dbReference type="KEGG" id="seg:SG0049"/>
<dbReference type="HOGENOM" id="CLU_001493_7_1_6"/>
<dbReference type="Proteomes" id="UP000008321">
    <property type="component" value="Chromosome"/>
</dbReference>
<dbReference type="GO" id="GO:0005829">
    <property type="term" value="C:cytosol"/>
    <property type="evidence" value="ECO:0007669"/>
    <property type="project" value="TreeGrafter"/>
</dbReference>
<dbReference type="GO" id="GO:0002161">
    <property type="term" value="F:aminoacyl-tRNA deacylase activity"/>
    <property type="evidence" value="ECO:0007669"/>
    <property type="project" value="InterPro"/>
</dbReference>
<dbReference type="GO" id="GO:0005524">
    <property type="term" value="F:ATP binding"/>
    <property type="evidence" value="ECO:0007669"/>
    <property type="project" value="UniProtKB-UniRule"/>
</dbReference>
<dbReference type="GO" id="GO:0004822">
    <property type="term" value="F:isoleucine-tRNA ligase activity"/>
    <property type="evidence" value="ECO:0007669"/>
    <property type="project" value="UniProtKB-UniRule"/>
</dbReference>
<dbReference type="GO" id="GO:0000049">
    <property type="term" value="F:tRNA binding"/>
    <property type="evidence" value="ECO:0007669"/>
    <property type="project" value="InterPro"/>
</dbReference>
<dbReference type="GO" id="GO:0008270">
    <property type="term" value="F:zinc ion binding"/>
    <property type="evidence" value="ECO:0007669"/>
    <property type="project" value="UniProtKB-UniRule"/>
</dbReference>
<dbReference type="GO" id="GO:0006428">
    <property type="term" value="P:isoleucyl-tRNA aminoacylation"/>
    <property type="evidence" value="ECO:0007669"/>
    <property type="project" value="UniProtKB-UniRule"/>
</dbReference>
<dbReference type="CDD" id="cd07960">
    <property type="entry name" value="Anticodon_Ia_Ile_BEm"/>
    <property type="match status" value="1"/>
</dbReference>
<dbReference type="CDD" id="cd00818">
    <property type="entry name" value="IleRS_core"/>
    <property type="match status" value="1"/>
</dbReference>
<dbReference type="FunFam" id="1.10.730.20:FF:000001">
    <property type="entry name" value="Isoleucine--tRNA ligase"/>
    <property type="match status" value="1"/>
</dbReference>
<dbReference type="FunFam" id="3.40.50.620:FF:000042">
    <property type="entry name" value="Isoleucine--tRNA ligase"/>
    <property type="match status" value="1"/>
</dbReference>
<dbReference type="FunFam" id="3.40.50.620:FF:000048">
    <property type="entry name" value="Isoleucine--tRNA ligase"/>
    <property type="match status" value="1"/>
</dbReference>
<dbReference type="FunFam" id="3.90.740.10:FF:000002">
    <property type="entry name" value="Isoleucine--tRNA ligase"/>
    <property type="match status" value="1"/>
</dbReference>
<dbReference type="Gene3D" id="1.10.730.20">
    <property type="match status" value="1"/>
</dbReference>
<dbReference type="Gene3D" id="3.40.50.620">
    <property type="entry name" value="HUPs"/>
    <property type="match status" value="2"/>
</dbReference>
<dbReference type="Gene3D" id="3.90.740.10">
    <property type="entry name" value="Valyl/Leucyl/Isoleucyl-tRNA synthetase, editing domain"/>
    <property type="match status" value="1"/>
</dbReference>
<dbReference type="HAMAP" id="MF_02002">
    <property type="entry name" value="Ile_tRNA_synth_type1"/>
    <property type="match status" value="1"/>
</dbReference>
<dbReference type="InterPro" id="IPR001412">
    <property type="entry name" value="aa-tRNA-synth_I_CS"/>
</dbReference>
<dbReference type="InterPro" id="IPR002300">
    <property type="entry name" value="aa-tRNA-synth_Ia"/>
</dbReference>
<dbReference type="InterPro" id="IPR033708">
    <property type="entry name" value="Anticodon_Ile_BEm"/>
</dbReference>
<dbReference type="InterPro" id="IPR002301">
    <property type="entry name" value="Ile-tRNA-ligase"/>
</dbReference>
<dbReference type="InterPro" id="IPR023585">
    <property type="entry name" value="Ile-tRNA-ligase_type1"/>
</dbReference>
<dbReference type="InterPro" id="IPR050081">
    <property type="entry name" value="Ile-tRNA_ligase"/>
</dbReference>
<dbReference type="InterPro" id="IPR013155">
    <property type="entry name" value="M/V/L/I-tRNA-synth_anticd-bd"/>
</dbReference>
<dbReference type="InterPro" id="IPR014729">
    <property type="entry name" value="Rossmann-like_a/b/a_fold"/>
</dbReference>
<dbReference type="InterPro" id="IPR009080">
    <property type="entry name" value="tRNAsynth_Ia_anticodon-bd"/>
</dbReference>
<dbReference type="InterPro" id="IPR009008">
    <property type="entry name" value="Val/Leu/Ile-tRNA-synth_edit"/>
</dbReference>
<dbReference type="InterPro" id="IPR010663">
    <property type="entry name" value="Znf_FPG/IleRS"/>
</dbReference>
<dbReference type="NCBIfam" id="TIGR00392">
    <property type="entry name" value="ileS"/>
    <property type="match status" value="1"/>
</dbReference>
<dbReference type="PANTHER" id="PTHR42765:SF1">
    <property type="entry name" value="ISOLEUCINE--TRNA LIGASE, MITOCHONDRIAL"/>
    <property type="match status" value="1"/>
</dbReference>
<dbReference type="PANTHER" id="PTHR42765">
    <property type="entry name" value="SOLEUCYL-TRNA SYNTHETASE"/>
    <property type="match status" value="1"/>
</dbReference>
<dbReference type="Pfam" id="PF08264">
    <property type="entry name" value="Anticodon_1"/>
    <property type="match status" value="1"/>
</dbReference>
<dbReference type="Pfam" id="PF00133">
    <property type="entry name" value="tRNA-synt_1"/>
    <property type="match status" value="1"/>
</dbReference>
<dbReference type="Pfam" id="PF06827">
    <property type="entry name" value="zf-FPG_IleRS"/>
    <property type="match status" value="1"/>
</dbReference>
<dbReference type="PRINTS" id="PR00984">
    <property type="entry name" value="TRNASYNTHILE"/>
</dbReference>
<dbReference type="SUPFAM" id="SSF47323">
    <property type="entry name" value="Anticodon-binding domain of a subclass of class I aminoacyl-tRNA synthetases"/>
    <property type="match status" value="1"/>
</dbReference>
<dbReference type="SUPFAM" id="SSF52374">
    <property type="entry name" value="Nucleotidylyl transferase"/>
    <property type="match status" value="1"/>
</dbReference>
<dbReference type="SUPFAM" id="SSF50677">
    <property type="entry name" value="ValRS/IleRS/LeuRS editing domain"/>
    <property type="match status" value="1"/>
</dbReference>
<dbReference type="PROSITE" id="PS00178">
    <property type="entry name" value="AA_TRNA_LIGASE_I"/>
    <property type="match status" value="1"/>
</dbReference>
<accession>B5RF43</accession>
<reference key="1">
    <citation type="journal article" date="2008" name="Genome Res.">
        <title>Comparative genome analysis of Salmonella enteritidis PT4 and Salmonella gallinarum 287/91 provides insights into evolutionary and host adaptation pathways.</title>
        <authorList>
            <person name="Thomson N.R."/>
            <person name="Clayton D.J."/>
            <person name="Windhorst D."/>
            <person name="Vernikos G."/>
            <person name="Davidson S."/>
            <person name="Churcher C."/>
            <person name="Quail M.A."/>
            <person name="Stevens M."/>
            <person name="Jones M.A."/>
            <person name="Watson M."/>
            <person name="Barron A."/>
            <person name="Layton A."/>
            <person name="Pickard D."/>
            <person name="Kingsley R.A."/>
            <person name="Bignell A."/>
            <person name="Clark L."/>
            <person name="Harris B."/>
            <person name="Ormond D."/>
            <person name="Abdellah Z."/>
            <person name="Brooks K."/>
            <person name="Cherevach I."/>
            <person name="Chillingworth T."/>
            <person name="Woodward J."/>
            <person name="Norberczak H."/>
            <person name="Lord A."/>
            <person name="Arrowsmith C."/>
            <person name="Jagels K."/>
            <person name="Moule S."/>
            <person name="Mungall K."/>
            <person name="Saunders M."/>
            <person name="Whitehead S."/>
            <person name="Chabalgoity J.A."/>
            <person name="Maskell D."/>
            <person name="Humphreys T."/>
            <person name="Roberts M."/>
            <person name="Barrow P.A."/>
            <person name="Dougan G."/>
            <person name="Parkhill J."/>
        </authorList>
    </citation>
    <scope>NUCLEOTIDE SEQUENCE [LARGE SCALE GENOMIC DNA]</scope>
    <source>
        <strain>287/91 / NCTC 13346</strain>
    </source>
</reference>
<evidence type="ECO:0000255" key="1">
    <source>
        <dbReference type="HAMAP-Rule" id="MF_02002"/>
    </source>
</evidence>
<keyword id="KW-0030">Aminoacyl-tRNA synthetase</keyword>
<keyword id="KW-0067">ATP-binding</keyword>
<keyword id="KW-0963">Cytoplasm</keyword>
<keyword id="KW-0436">Ligase</keyword>
<keyword id="KW-0479">Metal-binding</keyword>
<keyword id="KW-0547">Nucleotide-binding</keyword>
<keyword id="KW-0648">Protein biosynthesis</keyword>
<keyword id="KW-0862">Zinc</keyword>
<sequence>MSDYKSTLNLPETGFPMRGDLAKREPGMLARWTDDDLYGIIRAAKKGKKTFILHDGPPYANGSIHIGHSVNKILKDIIVKSKGLSGFDSPYVPGWDCHGLPIELKVEQEFGKPGEKFTAAEFRAKCREYAATQVDGQRKDFIRLGVLGDWSHPYLTMDFKTEANIIRALGRIIKNGHLHKGAKPVHWCVDCRSALAEAEVEYYDKTSPSIDVAFRAVDQDAVKAKFGLPGVSGPVSLVIWTTTPWTLPANRAISLAPDFDYALVQIDGQAVILAKDLVESVMQRIGAAEYTILGTVKGAELELLRFTHPFMGFDVPAILGDHVTLDAGTGAVHTAPGHGPDDYVIGQKYGLETANPVGPDGAYLPGTYPTLDGVNVFKANDIVIELLKEKGALLHVEKMQHSYPCCWRHKTPIIFRATPQWFVSMDKEGLRQQSLKEIKGVQWIPDWGQARIESMVANRPDWCISRQRTWGVPMSLFVHKETQELLPIERTLAAMEEVAKRVEVDGIQAWWDLDPKEILGEDADQYEKVPDTLDVWFDSGSTSYSVVDARPEFAGHAADMYLEGSDQHRGWFMSSLMISVAMKGKAPYRQVLTHGFTVDGQGRKMSKSIGNTVSPQDVMNKLGADILRLWVASTDYTGEMAVSDEILKRAADSYRRIRNTARFLLANLNGFNPATDMVKPEEMVVLDRWAVGCAKTAQQEILKAYEAYDFHEVVQRLMRFCSVEMGSFYLDIIKDRQYTAKADSVARRSCQTALYHIAEALVRWMAPIMSFTADEIWGYLPGEREKYVFTGEWYDGLFGLEENEEFNDAFWDDVRYIKDQVNKELENQKANGIKSNLEAKVTLKYADDANGTIKKLKLLGEEVRFIFITSQFVISEQAGGIDDENIQYNAGNTTVQAVVTRAEGDKCPRCWHYTTDVGKVAEHADICGRCVSNIAGNGEQRKFA</sequence>
<comment type="function">
    <text evidence="1">Catalyzes the attachment of isoleucine to tRNA(Ile). As IleRS can inadvertently accommodate and process structurally similar amino acids such as valine, to avoid such errors it has two additional distinct tRNA(Ile)-dependent editing activities. One activity is designated as 'pretransfer' editing and involves the hydrolysis of activated Val-AMP. The other activity is designated 'posttransfer' editing and involves deacylation of mischarged Val-tRNA(Ile).</text>
</comment>
<comment type="catalytic activity">
    <reaction evidence="1">
        <text>tRNA(Ile) + L-isoleucine + ATP = L-isoleucyl-tRNA(Ile) + AMP + diphosphate</text>
        <dbReference type="Rhea" id="RHEA:11060"/>
        <dbReference type="Rhea" id="RHEA-COMP:9666"/>
        <dbReference type="Rhea" id="RHEA-COMP:9695"/>
        <dbReference type="ChEBI" id="CHEBI:30616"/>
        <dbReference type="ChEBI" id="CHEBI:33019"/>
        <dbReference type="ChEBI" id="CHEBI:58045"/>
        <dbReference type="ChEBI" id="CHEBI:78442"/>
        <dbReference type="ChEBI" id="CHEBI:78528"/>
        <dbReference type="ChEBI" id="CHEBI:456215"/>
        <dbReference type="EC" id="6.1.1.5"/>
    </reaction>
</comment>
<comment type="cofactor">
    <cofactor evidence="1">
        <name>Zn(2+)</name>
        <dbReference type="ChEBI" id="CHEBI:29105"/>
    </cofactor>
    <text evidence="1">Binds 1 zinc ion per subunit.</text>
</comment>
<comment type="subunit">
    <text evidence="1">Monomer.</text>
</comment>
<comment type="subcellular location">
    <subcellularLocation>
        <location evidence="1">Cytoplasm</location>
    </subcellularLocation>
</comment>
<comment type="domain">
    <text evidence="1">IleRS has two distinct active sites: one for aminoacylation and one for editing. The misactivated valine is translocated from the active site to the editing site, which sterically excludes the correctly activated isoleucine. The single editing site contains two valyl binding pockets, one specific for each substrate (Val-AMP or Val-tRNA(Ile)).</text>
</comment>
<comment type="similarity">
    <text evidence="1">Belongs to the class-I aminoacyl-tRNA synthetase family. IleS type 1 subfamily.</text>
</comment>
<protein>
    <recommendedName>
        <fullName evidence="1">Isoleucine--tRNA ligase</fullName>
        <ecNumber evidence="1">6.1.1.5</ecNumber>
    </recommendedName>
    <alternativeName>
        <fullName evidence="1">Isoleucyl-tRNA synthetase</fullName>
        <shortName evidence="1">IleRS</shortName>
    </alternativeName>
</protein>
<organism>
    <name type="scientific">Salmonella gallinarum (strain 287/91 / NCTC 13346)</name>
    <dbReference type="NCBI Taxonomy" id="550538"/>
    <lineage>
        <taxon>Bacteria</taxon>
        <taxon>Pseudomonadati</taxon>
        <taxon>Pseudomonadota</taxon>
        <taxon>Gammaproteobacteria</taxon>
        <taxon>Enterobacterales</taxon>
        <taxon>Enterobacteriaceae</taxon>
        <taxon>Salmonella</taxon>
    </lineage>
</organism>
<gene>
    <name evidence="1" type="primary">ileS</name>
    <name type="ordered locus">SG0049</name>
</gene>
<proteinExistence type="inferred from homology"/>
<name>SYI_SALG2</name>
<feature type="chain" id="PRO_1000189192" description="Isoleucine--tRNA ligase">
    <location>
        <begin position="1"/>
        <end position="944"/>
    </location>
</feature>
<feature type="short sequence motif" description="'HIGH' region">
    <location>
        <begin position="58"/>
        <end position="68"/>
    </location>
</feature>
<feature type="short sequence motif" description="'KMSKS' region">
    <location>
        <begin position="604"/>
        <end position="608"/>
    </location>
</feature>
<feature type="binding site" evidence="1">
    <location>
        <position position="563"/>
    </location>
    <ligand>
        <name>L-isoleucyl-5'-AMP</name>
        <dbReference type="ChEBI" id="CHEBI:178002"/>
    </ligand>
</feature>
<feature type="binding site" evidence="1">
    <location>
        <position position="607"/>
    </location>
    <ligand>
        <name>ATP</name>
        <dbReference type="ChEBI" id="CHEBI:30616"/>
    </ligand>
</feature>
<feature type="binding site" evidence="1">
    <location>
        <position position="907"/>
    </location>
    <ligand>
        <name>Zn(2+)</name>
        <dbReference type="ChEBI" id="CHEBI:29105"/>
    </ligand>
</feature>
<feature type="binding site" evidence="1">
    <location>
        <position position="910"/>
    </location>
    <ligand>
        <name>Zn(2+)</name>
        <dbReference type="ChEBI" id="CHEBI:29105"/>
    </ligand>
</feature>
<feature type="binding site" evidence="1">
    <location>
        <position position="927"/>
    </location>
    <ligand>
        <name>Zn(2+)</name>
        <dbReference type="ChEBI" id="CHEBI:29105"/>
    </ligand>
</feature>
<feature type="binding site" evidence="1">
    <location>
        <position position="930"/>
    </location>
    <ligand>
        <name>Zn(2+)</name>
        <dbReference type="ChEBI" id="CHEBI:29105"/>
    </ligand>
</feature>